<name>KISHA_CHICK</name>
<gene>
    <name type="primary">TMEM167A</name>
    <name type="synonym">TMEM167</name>
    <name type="ORF">RCJMB04_25n4</name>
</gene>
<protein>
    <recommendedName>
        <fullName>Protein kish-A</fullName>
    </recommendedName>
    <alternativeName>
        <fullName>Transmembrane protein 167</fullName>
    </alternativeName>
    <alternativeName>
        <fullName>Transmembrane protein 167A</fullName>
    </alternativeName>
</protein>
<dbReference type="EMBL" id="AJ720798">
    <property type="protein sequence ID" value="CAG32457.1"/>
    <property type="molecule type" value="mRNA"/>
</dbReference>
<dbReference type="RefSeq" id="NP_001106925.1">
    <property type="nucleotide sequence ID" value="NM_001113454.3"/>
</dbReference>
<dbReference type="FunCoup" id="Q5ZII6">
    <property type="interactions" value="639"/>
</dbReference>
<dbReference type="STRING" id="9031.ENSGALP00000043412"/>
<dbReference type="GlyCosmos" id="Q5ZII6">
    <property type="glycosylation" value="1 site, No reported glycans"/>
</dbReference>
<dbReference type="GlyGen" id="Q5ZII6">
    <property type="glycosylation" value="1 site"/>
</dbReference>
<dbReference type="PaxDb" id="9031-ENSGALP00000043412"/>
<dbReference type="GeneID" id="770790"/>
<dbReference type="KEGG" id="gga:770790"/>
<dbReference type="CTD" id="153339"/>
<dbReference type="VEuPathDB" id="HostDB:geneid_770790"/>
<dbReference type="eggNOG" id="KOG3808">
    <property type="taxonomic scope" value="Eukaryota"/>
</dbReference>
<dbReference type="HOGENOM" id="CLU_152663_1_1_1"/>
<dbReference type="InParanoid" id="Q5ZII6"/>
<dbReference type="OrthoDB" id="10034655at2759"/>
<dbReference type="PhylomeDB" id="Q5ZII6"/>
<dbReference type="PRO" id="PR:Q5ZII6"/>
<dbReference type="Proteomes" id="UP000000539">
    <property type="component" value="Unassembled WGS sequence"/>
</dbReference>
<dbReference type="GO" id="GO:0000139">
    <property type="term" value="C:Golgi membrane"/>
    <property type="evidence" value="ECO:0007669"/>
    <property type="project" value="UniProtKB-SubCell"/>
</dbReference>
<dbReference type="GO" id="GO:0046907">
    <property type="term" value="P:intracellular transport"/>
    <property type="evidence" value="ECO:0000318"/>
    <property type="project" value="GO_Central"/>
</dbReference>
<dbReference type="GO" id="GO:0009306">
    <property type="term" value="P:protein secretion"/>
    <property type="evidence" value="ECO:0000318"/>
    <property type="project" value="GO_Central"/>
</dbReference>
<dbReference type="InterPro" id="IPR051523">
    <property type="entry name" value="KISH_domain"/>
</dbReference>
<dbReference type="InterPro" id="IPR009653">
    <property type="entry name" value="Ksh1"/>
</dbReference>
<dbReference type="PANTHER" id="PTHR13229">
    <property type="entry name" value="PROTEIN KISH-A"/>
    <property type="match status" value="1"/>
</dbReference>
<dbReference type="Pfam" id="PF06842">
    <property type="entry name" value="DUF1242"/>
    <property type="match status" value="1"/>
</dbReference>
<feature type="signal peptide" evidence="2">
    <location>
        <begin position="1"/>
        <end position="26"/>
    </location>
</feature>
<feature type="chain" id="PRO_0000247771" description="Protein kish-A">
    <location>
        <begin position="27"/>
        <end position="72"/>
    </location>
</feature>
<feature type="topological domain" description="Extracellular" evidence="2">
    <location>
        <begin position="27"/>
        <end position="53"/>
    </location>
</feature>
<feature type="transmembrane region" description="Helical" evidence="2">
    <location>
        <begin position="54"/>
        <end position="71"/>
    </location>
</feature>
<feature type="topological domain" description="Cytoplasmic" evidence="2">
    <location>
        <position position="72"/>
    </location>
</feature>
<feature type="glycosylation site" description="N-linked (GlcNAc...) asparagine" evidence="2">
    <location>
        <position position="35"/>
    </location>
</feature>
<keyword id="KW-0325">Glycoprotein</keyword>
<keyword id="KW-0333">Golgi apparatus</keyword>
<keyword id="KW-0472">Membrane</keyword>
<keyword id="KW-1185">Reference proteome</keyword>
<keyword id="KW-0732">Signal</keyword>
<keyword id="KW-0812">Transmembrane</keyword>
<keyword id="KW-1133">Transmembrane helix</keyword>
<evidence type="ECO:0000250" key="1"/>
<evidence type="ECO:0000255" key="2"/>
<evidence type="ECO:0000305" key="3"/>
<accession>Q5ZII6</accession>
<proteinExistence type="inferred from homology"/>
<sequence>MSAIFNFQSLLTVILLLICTCAYIRSLAPSLLDKNKTGLLGIFWKCARIGERKSPYVAVCCVVMAFSILFVQ</sequence>
<comment type="function">
    <text evidence="1">Involved in the early part of the secretory pathway.</text>
</comment>
<comment type="subcellular location">
    <subcellularLocation>
        <location evidence="1">Golgi apparatus membrane</location>
        <topology evidence="1">Single-pass type I membrane protein</topology>
    </subcellularLocation>
</comment>
<comment type="similarity">
    <text evidence="3">Belongs to the KISH family.</text>
</comment>
<reference key="1">
    <citation type="journal article" date="2005" name="Genome Biol.">
        <title>Full-length cDNAs from chicken bursal lymphocytes to facilitate gene function analysis.</title>
        <authorList>
            <person name="Caldwell R.B."/>
            <person name="Kierzek A.M."/>
            <person name="Arakawa H."/>
            <person name="Bezzubov Y."/>
            <person name="Zaim J."/>
            <person name="Fiedler P."/>
            <person name="Kutter S."/>
            <person name="Blagodatski A."/>
            <person name="Kostovska D."/>
            <person name="Koter M."/>
            <person name="Plachy J."/>
            <person name="Carninci P."/>
            <person name="Hayashizaki Y."/>
            <person name="Buerstedde J.-M."/>
        </authorList>
    </citation>
    <scope>NUCLEOTIDE SEQUENCE [LARGE SCALE MRNA]</scope>
    <source>
        <strain>CB</strain>
        <tissue>Bursa of Fabricius</tissue>
    </source>
</reference>
<organism>
    <name type="scientific">Gallus gallus</name>
    <name type="common">Chicken</name>
    <dbReference type="NCBI Taxonomy" id="9031"/>
    <lineage>
        <taxon>Eukaryota</taxon>
        <taxon>Metazoa</taxon>
        <taxon>Chordata</taxon>
        <taxon>Craniata</taxon>
        <taxon>Vertebrata</taxon>
        <taxon>Euteleostomi</taxon>
        <taxon>Archelosauria</taxon>
        <taxon>Archosauria</taxon>
        <taxon>Dinosauria</taxon>
        <taxon>Saurischia</taxon>
        <taxon>Theropoda</taxon>
        <taxon>Coelurosauria</taxon>
        <taxon>Aves</taxon>
        <taxon>Neognathae</taxon>
        <taxon>Galloanserae</taxon>
        <taxon>Galliformes</taxon>
        <taxon>Phasianidae</taxon>
        <taxon>Phasianinae</taxon>
        <taxon>Gallus</taxon>
    </lineage>
</organism>